<name>TAF4_CANGA</name>
<feature type="chain" id="PRO_0000343438" description="Transcription initiation factor TFIID subunit 4">
    <location>
        <begin position="1"/>
        <end position="336"/>
    </location>
</feature>
<feature type="domain" description="Histone-fold">
    <location>
        <begin position="141"/>
        <end position="209"/>
    </location>
</feature>
<feature type="region of interest" description="Disordered" evidence="2">
    <location>
        <begin position="1"/>
        <end position="93"/>
    </location>
</feature>
<feature type="compositionally biased region" description="Polar residues" evidence="2">
    <location>
        <begin position="1"/>
        <end position="15"/>
    </location>
</feature>
<feature type="compositionally biased region" description="Basic and acidic residues" evidence="2">
    <location>
        <begin position="76"/>
        <end position="90"/>
    </location>
</feature>
<proteinExistence type="inferred from homology"/>
<organism>
    <name type="scientific">Candida glabrata (strain ATCC 2001 / BCRC 20586 / JCM 3761 / NBRC 0622 / NRRL Y-65 / CBS 138)</name>
    <name type="common">Yeast</name>
    <name type="synonym">Nakaseomyces glabratus</name>
    <dbReference type="NCBI Taxonomy" id="284593"/>
    <lineage>
        <taxon>Eukaryota</taxon>
        <taxon>Fungi</taxon>
        <taxon>Dikarya</taxon>
        <taxon>Ascomycota</taxon>
        <taxon>Saccharomycotina</taxon>
        <taxon>Saccharomycetes</taxon>
        <taxon>Saccharomycetales</taxon>
        <taxon>Saccharomycetaceae</taxon>
        <taxon>Nakaseomyces</taxon>
    </lineage>
</organism>
<keyword id="KW-0539">Nucleus</keyword>
<keyword id="KW-1185">Reference proteome</keyword>
<keyword id="KW-0804">Transcription</keyword>
<keyword id="KW-0805">Transcription regulation</keyword>
<accession>Q6FNH1</accession>
<reference key="1">
    <citation type="journal article" date="2004" name="Nature">
        <title>Genome evolution in yeasts.</title>
        <authorList>
            <person name="Dujon B."/>
            <person name="Sherman D."/>
            <person name="Fischer G."/>
            <person name="Durrens P."/>
            <person name="Casaregola S."/>
            <person name="Lafontaine I."/>
            <person name="de Montigny J."/>
            <person name="Marck C."/>
            <person name="Neuveglise C."/>
            <person name="Talla E."/>
            <person name="Goffard N."/>
            <person name="Frangeul L."/>
            <person name="Aigle M."/>
            <person name="Anthouard V."/>
            <person name="Babour A."/>
            <person name="Barbe V."/>
            <person name="Barnay S."/>
            <person name="Blanchin S."/>
            <person name="Beckerich J.-M."/>
            <person name="Beyne E."/>
            <person name="Bleykasten C."/>
            <person name="Boisrame A."/>
            <person name="Boyer J."/>
            <person name="Cattolico L."/>
            <person name="Confanioleri F."/>
            <person name="de Daruvar A."/>
            <person name="Despons L."/>
            <person name="Fabre E."/>
            <person name="Fairhead C."/>
            <person name="Ferry-Dumazet H."/>
            <person name="Groppi A."/>
            <person name="Hantraye F."/>
            <person name="Hennequin C."/>
            <person name="Jauniaux N."/>
            <person name="Joyet P."/>
            <person name="Kachouri R."/>
            <person name="Kerrest A."/>
            <person name="Koszul R."/>
            <person name="Lemaire M."/>
            <person name="Lesur I."/>
            <person name="Ma L."/>
            <person name="Muller H."/>
            <person name="Nicaud J.-M."/>
            <person name="Nikolski M."/>
            <person name="Oztas S."/>
            <person name="Ozier-Kalogeropoulos O."/>
            <person name="Pellenz S."/>
            <person name="Potier S."/>
            <person name="Richard G.-F."/>
            <person name="Straub M.-L."/>
            <person name="Suleau A."/>
            <person name="Swennen D."/>
            <person name="Tekaia F."/>
            <person name="Wesolowski-Louvel M."/>
            <person name="Westhof E."/>
            <person name="Wirth B."/>
            <person name="Zeniou-Meyer M."/>
            <person name="Zivanovic Y."/>
            <person name="Bolotin-Fukuhara M."/>
            <person name="Thierry A."/>
            <person name="Bouchier C."/>
            <person name="Caudron B."/>
            <person name="Scarpelli C."/>
            <person name="Gaillardin C."/>
            <person name="Weissenbach J."/>
            <person name="Wincker P."/>
            <person name="Souciet J.-L."/>
        </authorList>
    </citation>
    <scope>NUCLEOTIDE SEQUENCE [LARGE SCALE GENOMIC DNA]</scope>
    <source>
        <strain>ATCC 2001 / BCRC 20586 / JCM 3761 / NBRC 0622 / NRRL Y-65 / CBS 138</strain>
    </source>
</reference>
<gene>
    <name type="primary">TAF4</name>
    <name type="ordered locus">CAGL0J11726g</name>
</gene>
<comment type="function">
    <text evidence="1">Functions as a component of the DNA-binding general transcription factor complex TFIID. Binding of TFIID to a promoter (with or without TATA element) is the initial step in pre-initiation complex (PIC) formation. TFIID plays a key role in the regulation of gene expression by RNA polymerase II through different activities such as transcription activator interaction, core promoter recognition and selectivity, TFIIA and TFIIB interaction, chromatin modification (histone acetylation by TAF1), facilitation of DNA opening and initiation of transcription (By similarity).</text>
</comment>
<comment type="subunit">
    <text evidence="1">The 1.2 MDa TFIID complex is composed of TATA binding protein (TBP) and the 14 TBP-associated factors.</text>
</comment>
<comment type="subcellular location">
    <subcellularLocation>
        <location evidence="1">Nucleus</location>
    </subcellularLocation>
</comment>
<comment type="similarity">
    <text evidence="3">Belongs to the TAF4 family.</text>
</comment>
<evidence type="ECO:0000250" key="1"/>
<evidence type="ECO:0000256" key="2">
    <source>
        <dbReference type="SAM" id="MobiDB-lite"/>
    </source>
</evidence>
<evidence type="ECO:0000305" key="3"/>
<protein>
    <recommendedName>
        <fullName>Transcription initiation factor TFIID subunit 4</fullName>
    </recommendedName>
    <alternativeName>
        <fullName>TBP-associated factor 4</fullName>
    </alternativeName>
</protein>
<sequence>MSSQKRPSEESTGSGTKKVKLEETKTPSLKSEASNLALPKMNDSSNNINAVPLALPKGGDKKKKANSKTAQSGKNGGKEDGTGQKQKATDPNKMQDVLISAGVDLKEEEALLSSTVNVSKTQQNAVVIPPHPPFLHPDQVSNFMKKVAKTQNFNLSFTKNTEILDMMSSACESYLRDIITNTIVVSRHRRKGVKVNYGRRSQVAAALRSIAINQKKEEERRMKKRIALGLEKEDYENKMDSEETLHRASNVTATLRAGSKKQYGWLTSSINKPASIGVKSAGKVATEIAARGESGLKFREAREEPGIVMRDLLFALEHRRIGVHNIISKGYARIRD</sequence>
<dbReference type="EMBL" id="CR380956">
    <property type="protein sequence ID" value="CAG61174.1"/>
    <property type="molecule type" value="Genomic_DNA"/>
</dbReference>
<dbReference type="RefSeq" id="XP_448223.1">
    <property type="nucleotide sequence ID" value="XM_448223.1"/>
</dbReference>
<dbReference type="SMR" id="Q6FNH1"/>
<dbReference type="FunCoup" id="Q6FNH1">
    <property type="interactions" value="388"/>
</dbReference>
<dbReference type="STRING" id="284593.Q6FNH1"/>
<dbReference type="EnsemblFungi" id="CAGL0J11726g-T">
    <property type="protein sequence ID" value="CAGL0J11726g-T-p1"/>
    <property type="gene ID" value="CAGL0J11726g"/>
</dbReference>
<dbReference type="KEGG" id="cgr:2889463"/>
<dbReference type="CGD" id="CAL0133662">
    <property type="gene designation" value="CAGL0J11726g"/>
</dbReference>
<dbReference type="VEuPathDB" id="FungiDB:B1J91_J11726g"/>
<dbReference type="VEuPathDB" id="FungiDB:CAGL0J11726g"/>
<dbReference type="eggNOG" id="KOG2341">
    <property type="taxonomic scope" value="Eukaryota"/>
</dbReference>
<dbReference type="HOGENOM" id="CLU_036634_0_0_1"/>
<dbReference type="InParanoid" id="Q6FNH1"/>
<dbReference type="OMA" id="YGWLTSS"/>
<dbReference type="Proteomes" id="UP000002428">
    <property type="component" value="Chromosome J"/>
</dbReference>
<dbReference type="GO" id="GO:0005669">
    <property type="term" value="C:transcription factor TFIID complex"/>
    <property type="evidence" value="ECO:0007669"/>
    <property type="project" value="EnsemblFungi"/>
</dbReference>
<dbReference type="GO" id="GO:0003682">
    <property type="term" value="F:chromatin binding"/>
    <property type="evidence" value="ECO:0007669"/>
    <property type="project" value="EnsemblFungi"/>
</dbReference>
<dbReference type="GO" id="GO:0003677">
    <property type="term" value="F:DNA binding"/>
    <property type="evidence" value="ECO:0007669"/>
    <property type="project" value="EnsemblFungi"/>
</dbReference>
<dbReference type="GO" id="GO:0016251">
    <property type="term" value="F:RNA polymerase II general transcription initiation factor activity"/>
    <property type="evidence" value="ECO:0007669"/>
    <property type="project" value="TreeGrafter"/>
</dbReference>
<dbReference type="GO" id="GO:0061629">
    <property type="term" value="F:RNA polymerase II-specific DNA-binding transcription factor binding"/>
    <property type="evidence" value="ECO:0007669"/>
    <property type="project" value="EnsemblFungi"/>
</dbReference>
<dbReference type="GO" id="GO:0045944">
    <property type="term" value="P:positive regulation of transcription by RNA polymerase II"/>
    <property type="evidence" value="ECO:0007669"/>
    <property type="project" value="EnsemblFungi"/>
</dbReference>
<dbReference type="GO" id="GO:0006367">
    <property type="term" value="P:transcription initiation at RNA polymerase II promoter"/>
    <property type="evidence" value="ECO:0007669"/>
    <property type="project" value="TreeGrafter"/>
</dbReference>
<dbReference type="CDD" id="cd08045">
    <property type="entry name" value="HFD_TAF4"/>
    <property type="match status" value="1"/>
</dbReference>
<dbReference type="InterPro" id="IPR045144">
    <property type="entry name" value="TAF4"/>
</dbReference>
<dbReference type="InterPro" id="IPR007900">
    <property type="entry name" value="TAF4_C"/>
</dbReference>
<dbReference type="PANTHER" id="PTHR15138">
    <property type="entry name" value="TRANSCRIPTION INITIATION FACTOR TFIID SUBUNIT 4"/>
    <property type="match status" value="1"/>
</dbReference>
<dbReference type="PANTHER" id="PTHR15138:SF14">
    <property type="entry name" value="TRANSCRIPTION INITIATION FACTOR TFIID SUBUNIT 4"/>
    <property type="match status" value="1"/>
</dbReference>
<dbReference type="Pfam" id="PF05236">
    <property type="entry name" value="TAF4"/>
    <property type="match status" value="1"/>
</dbReference>